<protein>
    <recommendedName>
        <fullName evidence="1">L-threonine 3-dehydrogenase</fullName>
        <shortName evidence="1">TDH</shortName>
        <ecNumber evidence="1">1.1.1.103</ecNumber>
    </recommendedName>
</protein>
<comment type="function">
    <text evidence="1">Catalyzes the NAD(+)-dependent oxidation of L-threonine to 2-amino-3-ketobutyrate.</text>
</comment>
<comment type="catalytic activity">
    <reaction evidence="1">
        <text>L-threonine + NAD(+) = (2S)-2-amino-3-oxobutanoate + NADH + H(+)</text>
        <dbReference type="Rhea" id="RHEA:13161"/>
        <dbReference type="ChEBI" id="CHEBI:15378"/>
        <dbReference type="ChEBI" id="CHEBI:57540"/>
        <dbReference type="ChEBI" id="CHEBI:57926"/>
        <dbReference type="ChEBI" id="CHEBI:57945"/>
        <dbReference type="ChEBI" id="CHEBI:78948"/>
        <dbReference type="EC" id="1.1.1.103"/>
    </reaction>
</comment>
<comment type="cofactor">
    <cofactor evidence="1">
        <name>Zn(2+)</name>
        <dbReference type="ChEBI" id="CHEBI:29105"/>
    </cofactor>
    <text evidence="1">Binds 2 Zn(2+) ions per subunit.</text>
</comment>
<comment type="pathway">
    <text evidence="1">Amino-acid degradation; L-threonine degradation via oxydo-reductase pathway; glycine from L-threonine: step 1/2.</text>
</comment>
<comment type="subunit">
    <text evidence="1">Homotetramer.</text>
</comment>
<comment type="subcellular location">
    <subcellularLocation>
        <location evidence="1">Cytoplasm</location>
    </subcellularLocation>
</comment>
<comment type="similarity">
    <text evidence="1">Belongs to the zinc-containing alcohol dehydrogenase family.</text>
</comment>
<dbReference type="EC" id="1.1.1.103" evidence="1"/>
<dbReference type="EMBL" id="CP000503">
    <property type="protein sequence ID" value="ABM22902.1"/>
    <property type="molecule type" value="Genomic_DNA"/>
</dbReference>
<dbReference type="RefSeq" id="WP_011787469.1">
    <property type="nucleotide sequence ID" value="NC_008750.1"/>
</dbReference>
<dbReference type="SMR" id="A1RE07"/>
<dbReference type="KEGG" id="shw:Sputw3181_0049"/>
<dbReference type="HOGENOM" id="CLU_026673_11_0_6"/>
<dbReference type="UniPathway" id="UPA00046">
    <property type="reaction ID" value="UER00505"/>
</dbReference>
<dbReference type="Proteomes" id="UP000002597">
    <property type="component" value="Chromosome"/>
</dbReference>
<dbReference type="GO" id="GO:0005737">
    <property type="term" value="C:cytoplasm"/>
    <property type="evidence" value="ECO:0007669"/>
    <property type="project" value="UniProtKB-SubCell"/>
</dbReference>
<dbReference type="GO" id="GO:0008743">
    <property type="term" value="F:L-threonine 3-dehydrogenase activity"/>
    <property type="evidence" value="ECO:0007669"/>
    <property type="project" value="UniProtKB-UniRule"/>
</dbReference>
<dbReference type="GO" id="GO:0008270">
    <property type="term" value="F:zinc ion binding"/>
    <property type="evidence" value="ECO:0007669"/>
    <property type="project" value="UniProtKB-UniRule"/>
</dbReference>
<dbReference type="GO" id="GO:0019518">
    <property type="term" value="P:L-threonine catabolic process to glycine"/>
    <property type="evidence" value="ECO:0007669"/>
    <property type="project" value="UniProtKB-UniPathway"/>
</dbReference>
<dbReference type="Gene3D" id="3.90.180.10">
    <property type="entry name" value="Medium-chain alcohol dehydrogenases, catalytic domain"/>
    <property type="match status" value="1"/>
</dbReference>
<dbReference type="Gene3D" id="3.40.50.720">
    <property type="entry name" value="NAD(P)-binding Rossmann-like Domain"/>
    <property type="match status" value="1"/>
</dbReference>
<dbReference type="HAMAP" id="MF_00627">
    <property type="entry name" value="Thr_dehydrog"/>
    <property type="match status" value="1"/>
</dbReference>
<dbReference type="InterPro" id="IPR013149">
    <property type="entry name" value="ADH-like_C"/>
</dbReference>
<dbReference type="InterPro" id="IPR013154">
    <property type="entry name" value="ADH-like_N"/>
</dbReference>
<dbReference type="InterPro" id="IPR002328">
    <property type="entry name" value="ADH_Zn_CS"/>
</dbReference>
<dbReference type="InterPro" id="IPR011032">
    <property type="entry name" value="GroES-like_sf"/>
</dbReference>
<dbReference type="InterPro" id="IPR004627">
    <property type="entry name" value="L-Threonine_3-DHase"/>
</dbReference>
<dbReference type="InterPro" id="IPR036291">
    <property type="entry name" value="NAD(P)-bd_dom_sf"/>
</dbReference>
<dbReference type="InterPro" id="IPR020843">
    <property type="entry name" value="PKS_ER"/>
</dbReference>
<dbReference type="InterPro" id="IPR050129">
    <property type="entry name" value="Zn_alcohol_dh"/>
</dbReference>
<dbReference type="NCBIfam" id="NF003808">
    <property type="entry name" value="PRK05396.1"/>
    <property type="match status" value="1"/>
</dbReference>
<dbReference type="NCBIfam" id="TIGR00692">
    <property type="entry name" value="tdh"/>
    <property type="match status" value="1"/>
</dbReference>
<dbReference type="PANTHER" id="PTHR43401">
    <property type="entry name" value="L-THREONINE 3-DEHYDROGENASE"/>
    <property type="match status" value="1"/>
</dbReference>
<dbReference type="PANTHER" id="PTHR43401:SF2">
    <property type="entry name" value="L-THREONINE 3-DEHYDROGENASE"/>
    <property type="match status" value="1"/>
</dbReference>
<dbReference type="Pfam" id="PF08240">
    <property type="entry name" value="ADH_N"/>
    <property type="match status" value="1"/>
</dbReference>
<dbReference type="Pfam" id="PF00107">
    <property type="entry name" value="ADH_zinc_N"/>
    <property type="match status" value="1"/>
</dbReference>
<dbReference type="SMART" id="SM00829">
    <property type="entry name" value="PKS_ER"/>
    <property type="match status" value="1"/>
</dbReference>
<dbReference type="SUPFAM" id="SSF50129">
    <property type="entry name" value="GroES-like"/>
    <property type="match status" value="1"/>
</dbReference>
<dbReference type="SUPFAM" id="SSF51735">
    <property type="entry name" value="NAD(P)-binding Rossmann-fold domains"/>
    <property type="match status" value="1"/>
</dbReference>
<dbReference type="PROSITE" id="PS00059">
    <property type="entry name" value="ADH_ZINC"/>
    <property type="match status" value="1"/>
</dbReference>
<name>TDH_SHESW</name>
<organism>
    <name type="scientific">Shewanella sp. (strain W3-18-1)</name>
    <dbReference type="NCBI Taxonomy" id="351745"/>
    <lineage>
        <taxon>Bacteria</taxon>
        <taxon>Pseudomonadati</taxon>
        <taxon>Pseudomonadota</taxon>
        <taxon>Gammaproteobacteria</taxon>
        <taxon>Alteromonadales</taxon>
        <taxon>Shewanellaceae</taxon>
        <taxon>Shewanella</taxon>
    </lineage>
</organism>
<evidence type="ECO:0000255" key="1">
    <source>
        <dbReference type="HAMAP-Rule" id="MF_00627"/>
    </source>
</evidence>
<feature type="chain" id="PRO_1000051660" description="L-threonine 3-dehydrogenase">
    <location>
        <begin position="1"/>
        <end position="341"/>
    </location>
</feature>
<feature type="active site" description="Charge relay system" evidence="1">
    <location>
        <position position="40"/>
    </location>
</feature>
<feature type="active site" description="Charge relay system" evidence="1">
    <location>
        <position position="43"/>
    </location>
</feature>
<feature type="binding site" evidence="1">
    <location>
        <position position="38"/>
    </location>
    <ligand>
        <name>Zn(2+)</name>
        <dbReference type="ChEBI" id="CHEBI:29105"/>
        <label>1</label>
        <note>catalytic</note>
    </ligand>
</feature>
<feature type="binding site" evidence="1">
    <location>
        <position position="63"/>
    </location>
    <ligand>
        <name>Zn(2+)</name>
        <dbReference type="ChEBI" id="CHEBI:29105"/>
        <label>1</label>
        <note>catalytic</note>
    </ligand>
</feature>
<feature type="binding site" evidence="1">
    <location>
        <position position="64"/>
    </location>
    <ligand>
        <name>Zn(2+)</name>
        <dbReference type="ChEBI" id="CHEBI:29105"/>
        <label>1</label>
        <note>catalytic</note>
    </ligand>
</feature>
<feature type="binding site" evidence="1">
    <location>
        <position position="93"/>
    </location>
    <ligand>
        <name>Zn(2+)</name>
        <dbReference type="ChEBI" id="CHEBI:29105"/>
        <label>2</label>
    </ligand>
</feature>
<feature type="binding site" evidence="1">
    <location>
        <position position="96"/>
    </location>
    <ligand>
        <name>Zn(2+)</name>
        <dbReference type="ChEBI" id="CHEBI:29105"/>
        <label>2</label>
    </ligand>
</feature>
<feature type="binding site" evidence="1">
    <location>
        <position position="99"/>
    </location>
    <ligand>
        <name>Zn(2+)</name>
        <dbReference type="ChEBI" id="CHEBI:29105"/>
        <label>2</label>
    </ligand>
</feature>
<feature type="binding site" evidence="1">
    <location>
        <position position="107"/>
    </location>
    <ligand>
        <name>Zn(2+)</name>
        <dbReference type="ChEBI" id="CHEBI:29105"/>
        <label>2</label>
    </ligand>
</feature>
<feature type="binding site" evidence="1">
    <location>
        <position position="175"/>
    </location>
    <ligand>
        <name>NAD(+)</name>
        <dbReference type="ChEBI" id="CHEBI:57540"/>
    </ligand>
</feature>
<feature type="binding site" evidence="1">
    <location>
        <position position="195"/>
    </location>
    <ligand>
        <name>NAD(+)</name>
        <dbReference type="ChEBI" id="CHEBI:57540"/>
    </ligand>
</feature>
<feature type="binding site" evidence="1">
    <location>
        <position position="200"/>
    </location>
    <ligand>
        <name>NAD(+)</name>
        <dbReference type="ChEBI" id="CHEBI:57540"/>
    </ligand>
</feature>
<feature type="binding site" evidence="1">
    <location>
        <begin position="262"/>
        <end position="264"/>
    </location>
    <ligand>
        <name>NAD(+)</name>
        <dbReference type="ChEBI" id="CHEBI:57540"/>
    </ligand>
</feature>
<feature type="binding site" evidence="1">
    <location>
        <begin position="286"/>
        <end position="287"/>
    </location>
    <ligand>
        <name>NAD(+)</name>
        <dbReference type="ChEBI" id="CHEBI:57540"/>
    </ligand>
</feature>
<feature type="site" description="Important for catalytic activity for the proton relay mechanism but does not participate directly in the coordination of zinc atom" evidence="1">
    <location>
        <position position="148"/>
    </location>
</feature>
<proteinExistence type="inferred from homology"/>
<keyword id="KW-0963">Cytoplasm</keyword>
<keyword id="KW-0479">Metal-binding</keyword>
<keyword id="KW-0520">NAD</keyword>
<keyword id="KW-0560">Oxidoreductase</keyword>
<keyword id="KW-0862">Zinc</keyword>
<gene>
    <name evidence="1" type="primary">tdh</name>
    <name type="ordered locus">Sputw3181_0049</name>
</gene>
<sequence>MKALSKLKAEKGIWLVDAPKPVMGHNDLLIKIKKTAICGTDMHIYNWDEWSQKTIPVPMVVGHEYVGEVVDIGQEVRGFNIGDRVSGEGHITCGHCRNCRAGRTHLCRNTSGVGVNREGSFAEYLVIPAFNAFKIPDDISDDLASIFDPFGNAVHTALSFDLVGEDVLITGAGPIGIMAAAVCRHVGARHVVITDVNEYRLELARKMGATRAVNVSKESLKDVMKELGMTEGFDVGLEMSGVPSAFHAMLDTMNHGGKIAMLGIPGGEMAIDWSKVIFKGLVIKGIYGREMFETWYKMASLIQSGLDISPIITHHFKIDDFQQGFDAMGSGQSGKVILSWD</sequence>
<reference key="1">
    <citation type="submission" date="2006-12" db="EMBL/GenBank/DDBJ databases">
        <title>Complete sequence of Shewanella sp. W3-18-1.</title>
        <authorList>
            <consortium name="US DOE Joint Genome Institute"/>
            <person name="Copeland A."/>
            <person name="Lucas S."/>
            <person name="Lapidus A."/>
            <person name="Barry K."/>
            <person name="Detter J.C."/>
            <person name="Glavina del Rio T."/>
            <person name="Hammon N."/>
            <person name="Israni S."/>
            <person name="Dalin E."/>
            <person name="Tice H."/>
            <person name="Pitluck S."/>
            <person name="Chain P."/>
            <person name="Malfatti S."/>
            <person name="Shin M."/>
            <person name="Vergez L."/>
            <person name="Schmutz J."/>
            <person name="Larimer F."/>
            <person name="Land M."/>
            <person name="Hauser L."/>
            <person name="Kyrpides N."/>
            <person name="Lykidis A."/>
            <person name="Tiedje J."/>
            <person name="Richardson P."/>
        </authorList>
    </citation>
    <scope>NUCLEOTIDE SEQUENCE [LARGE SCALE GENOMIC DNA]</scope>
    <source>
        <strain>W3-18-1</strain>
    </source>
</reference>
<accession>A1RE07</accession>